<dbReference type="EC" id="2.7.2.8" evidence="1"/>
<dbReference type="EMBL" id="CP000240">
    <property type="protein sequence ID" value="ABD02645.1"/>
    <property type="molecule type" value="Genomic_DNA"/>
</dbReference>
<dbReference type="RefSeq" id="WP_011433289.1">
    <property type="nucleotide sequence ID" value="NC_007776.1"/>
</dbReference>
<dbReference type="SMR" id="Q2JHF7"/>
<dbReference type="STRING" id="321332.CYB_1687"/>
<dbReference type="KEGG" id="cyb:CYB_1687"/>
<dbReference type="eggNOG" id="COG0548">
    <property type="taxonomic scope" value="Bacteria"/>
</dbReference>
<dbReference type="HOGENOM" id="CLU_053680_0_1_3"/>
<dbReference type="OrthoDB" id="9803155at2"/>
<dbReference type="UniPathway" id="UPA00068">
    <property type="reaction ID" value="UER00107"/>
</dbReference>
<dbReference type="Proteomes" id="UP000001938">
    <property type="component" value="Chromosome"/>
</dbReference>
<dbReference type="GO" id="GO:0005737">
    <property type="term" value="C:cytoplasm"/>
    <property type="evidence" value="ECO:0007669"/>
    <property type="project" value="UniProtKB-SubCell"/>
</dbReference>
<dbReference type="GO" id="GO:0003991">
    <property type="term" value="F:acetylglutamate kinase activity"/>
    <property type="evidence" value="ECO:0007669"/>
    <property type="project" value="UniProtKB-UniRule"/>
</dbReference>
<dbReference type="GO" id="GO:0005524">
    <property type="term" value="F:ATP binding"/>
    <property type="evidence" value="ECO:0007669"/>
    <property type="project" value="UniProtKB-UniRule"/>
</dbReference>
<dbReference type="GO" id="GO:0042450">
    <property type="term" value="P:arginine biosynthetic process via ornithine"/>
    <property type="evidence" value="ECO:0007669"/>
    <property type="project" value="UniProtKB-UniRule"/>
</dbReference>
<dbReference type="GO" id="GO:0006526">
    <property type="term" value="P:L-arginine biosynthetic process"/>
    <property type="evidence" value="ECO:0007669"/>
    <property type="project" value="UniProtKB-UniPathway"/>
</dbReference>
<dbReference type="CDD" id="cd04250">
    <property type="entry name" value="AAK_NAGK-C"/>
    <property type="match status" value="1"/>
</dbReference>
<dbReference type="FunFam" id="3.40.1160.10:FF:000004">
    <property type="entry name" value="Acetylglutamate kinase"/>
    <property type="match status" value="1"/>
</dbReference>
<dbReference type="Gene3D" id="3.40.1160.10">
    <property type="entry name" value="Acetylglutamate kinase-like"/>
    <property type="match status" value="1"/>
</dbReference>
<dbReference type="HAMAP" id="MF_00082">
    <property type="entry name" value="ArgB"/>
    <property type="match status" value="1"/>
</dbReference>
<dbReference type="InterPro" id="IPR036393">
    <property type="entry name" value="AceGlu_kinase-like_sf"/>
</dbReference>
<dbReference type="InterPro" id="IPR004662">
    <property type="entry name" value="AcgluKinase_fam"/>
</dbReference>
<dbReference type="InterPro" id="IPR037528">
    <property type="entry name" value="ArgB"/>
</dbReference>
<dbReference type="InterPro" id="IPR001048">
    <property type="entry name" value="Asp/Glu/Uridylate_kinase"/>
</dbReference>
<dbReference type="InterPro" id="IPR001057">
    <property type="entry name" value="Glu/AcGlu_kinase"/>
</dbReference>
<dbReference type="InterPro" id="IPR041727">
    <property type="entry name" value="NAGK-C"/>
</dbReference>
<dbReference type="NCBIfam" id="TIGR00761">
    <property type="entry name" value="argB"/>
    <property type="match status" value="1"/>
</dbReference>
<dbReference type="PANTHER" id="PTHR23342">
    <property type="entry name" value="N-ACETYLGLUTAMATE SYNTHASE"/>
    <property type="match status" value="1"/>
</dbReference>
<dbReference type="PANTHER" id="PTHR23342:SF0">
    <property type="entry name" value="N-ACETYLGLUTAMATE SYNTHASE, MITOCHONDRIAL"/>
    <property type="match status" value="1"/>
</dbReference>
<dbReference type="Pfam" id="PF00696">
    <property type="entry name" value="AA_kinase"/>
    <property type="match status" value="1"/>
</dbReference>
<dbReference type="PIRSF" id="PIRSF000728">
    <property type="entry name" value="NAGK"/>
    <property type="match status" value="1"/>
</dbReference>
<dbReference type="PRINTS" id="PR00474">
    <property type="entry name" value="GLU5KINASE"/>
</dbReference>
<dbReference type="SUPFAM" id="SSF53633">
    <property type="entry name" value="Carbamate kinase-like"/>
    <property type="match status" value="1"/>
</dbReference>
<name>ARGB_SYNJB</name>
<keyword id="KW-0028">Amino-acid biosynthesis</keyword>
<keyword id="KW-0055">Arginine biosynthesis</keyword>
<keyword id="KW-0067">ATP-binding</keyword>
<keyword id="KW-0963">Cytoplasm</keyword>
<keyword id="KW-0418">Kinase</keyword>
<keyword id="KW-0547">Nucleotide-binding</keyword>
<keyword id="KW-1185">Reference proteome</keyword>
<keyword id="KW-0808">Transferase</keyword>
<evidence type="ECO:0000255" key="1">
    <source>
        <dbReference type="HAMAP-Rule" id="MF_00082"/>
    </source>
</evidence>
<feature type="chain" id="PRO_0000264773" description="Acetylglutamate kinase">
    <location>
        <begin position="1"/>
        <end position="312"/>
    </location>
</feature>
<feature type="binding site" evidence="1">
    <location>
        <begin position="77"/>
        <end position="78"/>
    </location>
    <ligand>
        <name>substrate</name>
    </ligand>
</feature>
<feature type="binding site" evidence="1">
    <location>
        <position position="99"/>
    </location>
    <ligand>
        <name>substrate</name>
    </ligand>
</feature>
<feature type="binding site" evidence="1">
    <location>
        <position position="192"/>
    </location>
    <ligand>
        <name>substrate</name>
    </ligand>
</feature>
<feature type="site" description="Transition state stabilizer" evidence="1">
    <location>
        <position position="42"/>
    </location>
</feature>
<feature type="site" description="Transition state stabilizer" evidence="1">
    <location>
        <position position="255"/>
    </location>
</feature>
<accession>Q2JHF7</accession>
<protein>
    <recommendedName>
        <fullName evidence="1">Acetylglutamate kinase</fullName>
        <ecNumber evidence="1">2.7.2.8</ecNumber>
    </recommendedName>
    <alternativeName>
        <fullName evidence="1">N-acetyl-L-glutamate 5-phosphotransferase</fullName>
    </alternativeName>
    <alternativeName>
        <fullName evidence="1">NAG kinase</fullName>
        <shortName evidence="1">NAGK</shortName>
    </alternativeName>
</protein>
<organism>
    <name type="scientific">Synechococcus sp. (strain JA-2-3B'a(2-13))</name>
    <name type="common">Cyanobacteria bacterium Yellowstone B-Prime</name>
    <dbReference type="NCBI Taxonomy" id="321332"/>
    <lineage>
        <taxon>Bacteria</taxon>
        <taxon>Bacillati</taxon>
        <taxon>Cyanobacteriota</taxon>
        <taxon>Cyanophyceae</taxon>
        <taxon>Synechococcales</taxon>
        <taxon>Synechococcaceae</taxon>
        <taxon>Synechococcus</taxon>
    </lineage>
</organism>
<proteinExistence type="inferred from homology"/>
<sequence length="312" mass="32873">MQTNSSLSEATGSACDPLTRAQILIEALPYIQQYQGRVIVIKYGGAAMVHQERRAEVLRDIVFLACVGIRPVLVHGGGPEINSWLQKLDIPFKFVDGLRVTDAATMEVVEMVLVGKVNKQIVQLISLAGGSAVGLCGRDGNLIKARSQGRAEIGFVGEVSSINPQLLQTLLEGGQIPVISSVAADETGQAYNINADTVAGELAASLGAEKLILLTDTPGILKDPQDRSSLITLLDIETARQLIQAGVVKGGMIPKVQCCIRALAQGVRAAHILDGGSPHSLLLELLTDAGVGTKLVPSQFSAQLEGLNNGSR</sequence>
<comment type="function">
    <text evidence="1">Catalyzes the ATP-dependent phosphorylation of N-acetyl-L-glutamate.</text>
</comment>
<comment type="catalytic activity">
    <reaction evidence="1">
        <text>N-acetyl-L-glutamate + ATP = N-acetyl-L-glutamyl 5-phosphate + ADP</text>
        <dbReference type="Rhea" id="RHEA:14629"/>
        <dbReference type="ChEBI" id="CHEBI:30616"/>
        <dbReference type="ChEBI" id="CHEBI:44337"/>
        <dbReference type="ChEBI" id="CHEBI:57936"/>
        <dbReference type="ChEBI" id="CHEBI:456216"/>
        <dbReference type="EC" id="2.7.2.8"/>
    </reaction>
</comment>
<comment type="pathway">
    <text evidence="1">Amino-acid biosynthesis; L-arginine biosynthesis; N(2)-acetyl-L-ornithine from L-glutamate: step 2/4.</text>
</comment>
<comment type="subcellular location">
    <subcellularLocation>
        <location evidence="1">Cytoplasm</location>
    </subcellularLocation>
</comment>
<comment type="similarity">
    <text evidence="1">Belongs to the acetylglutamate kinase family. ArgB subfamily.</text>
</comment>
<gene>
    <name evidence="1" type="primary">argB</name>
    <name type="ordered locus">CYB_1687</name>
</gene>
<reference key="1">
    <citation type="journal article" date="2007" name="ISME J.">
        <title>Population level functional diversity in a microbial community revealed by comparative genomic and metagenomic analyses.</title>
        <authorList>
            <person name="Bhaya D."/>
            <person name="Grossman A.R."/>
            <person name="Steunou A.-S."/>
            <person name="Khuri N."/>
            <person name="Cohan F.M."/>
            <person name="Hamamura N."/>
            <person name="Melendrez M.C."/>
            <person name="Bateson M.M."/>
            <person name="Ward D.M."/>
            <person name="Heidelberg J.F."/>
        </authorList>
    </citation>
    <scope>NUCLEOTIDE SEQUENCE [LARGE SCALE GENOMIC DNA]</scope>
    <source>
        <strain>JA-2-3B'a(2-13)</strain>
    </source>
</reference>